<evidence type="ECO:0000255" key="1">
    <source>
        <dbReference type="HAMAP-Rule" id="MF_00403"/>
    </source>
</evidence>
<evidence type="ECO:0000256" key="2">
    <source>
        <dbReference type="SAM" id="MobiDB-lite"/>
    </source>
</evidence>
<evidence type="ECO:0000305" key="3"/>
<dbReference type="EMBL" id="AE017340">
    <property type="protein sequence ID" value="AAV81190.1"/>
    <property type="molecule type" value="Genomic_DNA"/>
</dbReference>
<dbReference type="RefSeq" id="WP_011233609.1">
    <property type="nucleotide sequence ID" value="NC_006512.1"/>
</dbReference>
<dbReference type="SMR" id="Q5QWB6"/>
<dbReference type="STRING" id="283942.IL0347"/>
<dbReference type="GeneID" id="41335499"/>
<dbReference type="KEGG" id="ilo:IL0347"/>
<dbReference type="eggNOG" id="COG0048">
    <property type="taxonomic scope" value="Bacteria"/>
</dbReference>
<dbReference type="HOGENOM" id="CLU_104295_1_2_6"/>
<dbReference type="OrthoDB" id="9802366at2"/>
<dbReference type="Proteomes" id="UP000001171">
    <property type="component" value="Chromosome"/>
</dbReference>
<dbReference type="GO" id="GO:0015935">
    <property type="term" value="C:small ribosomal subunit"/>
    <property type="evidence" value="ECO:0007669"/>
    <property type="project" value="InterPro"/>
</dbReference>
<dbReference type="GO" id="GO:0019843">
    <property type="term" value="F:rRNA binding"/>
    <property type="evidence" value="ECO:0007669"/>
    <property type="project" value="UniProtKB-UniRule"/>
</dbReference>
<dbReference type="GO" id="GO:0003735">
    <property type="term" value="F:structural constituent of ribosome"/>
    <property type="evidence" value="ECO:0007669"/>
    <property type="project" value="InterPro"/>
</dbReference>
<dbReference type="GO" id="GO:0000049">
    <property type="term" value="F:tRNA binding"/>
    <property type="evidence" value="ECO:0007669"/>
    <property type="project" value="UniProtKB-UniRule"/>
</dbReference>
<dbReference type="GO" id="GO:0006412">
    <property type="term" value="P:translation"/>
    <property type="evidence" value="ECO:0007669"/>
    <property type="project" value="UniProtKB-UniRule"/>
</dbReference>
<dbReference type="CDD" id="cd03368">
    <property type="entry name" value="Ribosomal_S12"/>
    <property type="match status" value="1"/>
</dbReference>
<dbReference type="FunFam" id="2.40.50.140:FF:000001">
    <property type="entry name" value="30S ribosomal protein S12"/>
    <property type="match status" value="1"/>
</dbReference>
<dbReference type="Gene3D" id="2.40.50.140">
    <property type="entry name" value="Nucleic acid-binding proteins"/>
    <property type="match status" value="1"/>
</dbReference>
<dbReference type="HAMAP" id="MF_00403_B">
    <property type="entry name" value="Ribosomal_uS12_B"/>
    <property type="match status" value="1"/>
</dbReference>
<dbReference type="InterPro" id="IPR012340">
    <property type="entry name" value="NA-bd_OB-fold"/>
</dbReference>
<dbReference type="InterPro" id="IPR006032">
    <property type="entry name" value="Ribosomal_uS12"/>
</dbReference>
<dbReference type="InterPro" id="IPR005679">
    <property type="entry name" value="Ribosomal_uS12_bac"/>
</dbReference>
<dbReference type="NCBIfam" id="TIGR00981">
    <property type="entry name" value="rpsL_bact"/>
    <property type="match status" value="1"/>
</dbReference>
<dbReference type="PANTHER" id="PTHR11652">
    <property type="entry name" value="30S RIBOSOMAL PROTEIN S12 FAMILY MEMBER"/>
    <property type="match status" value="1"/>
</dbReference>
<dbReference type="Pfam" id="PF00164">
    <property type="entry name" value="Ribosom_S12_S23"/>
    <property type="match status" value="1"/>
</dbReference>
<dbReference type="PIRSF" id="PIRSF002133">
    <property type="entry name" value="Ribosomal_S12/S23"/>
    <property type="match status" value="1"/>
</dbReference>
<dbReference type="PRINTS" id="PR01034">
    <property type="entry name" value="RIBOSOMALS12"/>
</dbReference>
<dbReference type="SUPFAM" id="SSF50249">
    <property type="entry name" value="Nucleic acid-binding proteins"/>
    <property type="match status" value="1"/>
</dbReference>
<dbReference type="PROSITE" id="PS00055">
    <property type="entry name" value="RIBOSOMAL_S12"/>
    <property type="match status" value="1"/>
</dbReference>
<sequence length="124" mass="13717">MATVNQLVRKGRQKPVVKSNVPALEACPQKRGVCTRVYTTTPKKPNSAMRKVCRVRLTNGYEVSSYIGGEGHNLQEHSVVLIRGGRVKDLPGVRYHTVRGALDCSGVNDRRQGRSKYGAKRPKS</sequence>
<name>RS12_IDILO</name>
<keyword id="KW-1185">Reference proteome</keyword>
<keyword id="KW-0687">Ribonucleoprotein</keyword>
<keyword id="KW-0689">Ribosomal protein</keyword>
<keyword id="KW-0694">RNA-binding</keyword>
<keyword id="KW-0699">rRNA-binding</keyword>
<keyword id="KW-0820">tRNA-binding</keyword>
<organism>
    <name type="scientific">Idiomarina loihiensis (strain ATCC BAA-735 / DSM 15497 / L2-TR)</name>
    <dbReference type="NCBI Taxonomy" id="283942"/>
    <lineage>
        <taxon>Bacteria</taxon>
        <taxon>Pseudomonadati</taxon>
        <taxon>Pseudomonadota</taxon>
        <taxon>Gammaproteobacteria</taxon>
        <taxon>Alteromonadales</taxon>
        <taxon>Idiomarinaceae</taxon>
        <taxon>Idiomarina</taxon>
    </lineage>
</organism>
<gene>
    <name evidence="1" type="primary">rpsL</name>
    <name type="ordered locus">IL0347</name>
</gene>
<proteinExistence type="inferred from homology"/>
<reference key="1">
    <citation type="journal article" date="2004" name="Proc. Natl. Acad. Sci. U.S.A.">
        <title>Genome sequence of the deep-sea gamma-proteobacterium Idiomarina loihiensis reveals amino acid fermentation as a source of carbon and energy.</title>
        <authorList>
            <person name="Hou S."/>
            <person name="Saw J.H."/>
            <person name="Lee K.S."/>
            <person name="Freitas T.A."/>
            <person name="Belisle C."/>
            <person name="Kawarabayasi Y."/>
            <person name="Donachie S.P."/>
            <person name="Pikina A."/>
            <person name="Galperin M.Y."/>
            <person name="Koonin E.V."/>
            <person name="Makarova K.S."/>
            <person name="Omelchenko M.V."/>
            <person name="Sorokin A."/>
            <person name="Wolf Y.I."/>
            <person name="Li Q.X."/>
            <person name="Keum Y.S."/>
            <person name="Campbell S."/>
            <person name="Denery J."/>
            <person name="Aizawa S."/>
            <person name="Shibata S."/>
            <person name="Malahoff A."/>
            <person name="Alam M."/>
        </authorList>
    </citation>
    <scope>NUCLEOTIDE SEQUENCE [LARGE SCALE GENOMIC DNA]</scope>
    <source>
        <strain>ATCC BAA-735 / DSM 15497 / L2-TR</strain>
    </source>
</reference>
<comment type="function">
    <text evidence="1">With S4 and S5 plays an important role in translational accuracy.</text>
</comment>
<comment type="function">
    <text evidence="1">Interacts with and stabilizes bases of the 16S rRNA that are involved in tRNA selection in the A site and with the mRNA backbone. Located at the interface of the 30S and 50S subunits, it traverses the body of the 30S subunit contacting proteins on the other side and probably holding the rRNA structure together. The combined cluster of proteins S8, S12 and S17 appears to hold together the shoulder and platform of the 30S subunit.</text>
</comment>
<comment type="subunit">
    <text evidence="1">Part of the 30S ribosomal subunit. Contacts proteins S8 and S17. May interact with IF1 in the 30S initiation complex.</text>
</comment>
<comment type="similarity">
    <text evidence="1">Belongs to the universal ribosomal protein uS12 family.</text>
</comment>
<comment type="caution">
    <text evidence="3">Because the enzyme that would modify Asp-89 to 3-methylthioaspartic acid has not been found in the proteome of this organism, that modification is not predicted.</text>
</comment>
<protein>
    <recommendedName>
        <fullName evidence="1">Small ribosomal subunit protein uS12</fullName>
    </recommendedName>
    <alternativeName>
        <fullName evidence="3">30S ribosomal protein S12</fullName>
    </alternativeName>
</protein>
<feature type="chain" id="PRO_0000146237" description="Small ribosomal subunit protein uS12">
    <location>
        <begin position="1"/>
        <end position="124"/>
    </location>
</feature>
<feature type="region of interest" description="Disordered" evidence="2">
    <location>
        <begin position="105"/>
        <end position="124"/>
    </location>
</feature>
<feature type="compositionally biased region" description="Basic residues" evidence="2">
    <location>
        <begin position="113"/>
        <end position="124"/>
    </location>
</feature>
<accession>Q5QWB6</accession>